<name>HIS4_MARMM</name>
<protein>
    <recommendedName>
        <fullName evidence="1">1-(5-phosphoribosyl)-5-[(5-phosphoribosylamino)methylideneamino] imidazole-4-carboxamide isomerase</fullName>
        <ecNumber evidence="1">5.3.1.16</ecNumber>
    </recommendedName>
    <alternativeName>
        <fullName evidence="1">Phosphoribosylformimino-5-aminoimidazole carboxamide ribotide isomerase</fullName>
    </alternativeName>
</protein>
<proteinExistence type="inferred from homology"/>
<gene>
    <name evidence="1" type="primary">hisA</name>
    <name type="ordered locus">Mmar10_1612</name>
</gene>
<organism>
    <name type="scientific">Maricaulis maris (strain MCS10)</name>
    <name type="common">Caulobacter maris</name>
    <dbReference type="NCBI Taxonomy" id="394221"/>
    <lineage>
        <taxon>Bacteria</taxon>
        <taxon>Pseudomonadati</taxon>
        <taxon>Pseudomonadota</taxon>
        <taxon>Alphaproteobacteria</taxon>
        <taxon>Maricaulales</taxon>
        <taxon>Maricaulaceae</taxon>
        <taxon>Maricaulis</taxon>
    </lineage>
</organism>
<sequence>MILYPAIDLLDGRVVRLHKGAFDAVTDYGDDPMRVAEQFGEAGAVWVHIVDLSGARDGARRQGALIRSLCETGLRVQTGGGVRSAEDIEDLLAAGVERVIIGSLAVTDTNRVAGWLQNYGGDRITLALDVRQIGGQYRPALKGWTDMADTTLDDVISAYEGTGLAHALVTDIGRDGDLSGPNIALYKRLATDYPNIDWQASGGVSSLDDLRAARAAGAAGAITGKALYEGRFTVGEAIACLRDA</sequence>
<keyword id="KW-0028">Amino-acid biosynthesis</keyword>
<keyword id="KW-0963">Cytoplasm</keyword>
<keyword id="KW-0368">Histidine biosynthesis</keyword>
<keyword id="KW-0413">Isomerase</keyword>
<keyword id="KW-1185">Reference proteome</keyword>
<comment type="catalytic activity">
    <reaction evidence="1">
        <text>1-(5-phospho-beta-D-ribosyl)-5-[(5-phospho-beta-D-ribosylamino)methylideneamino]imidazole-4-carboxamide = 5-[(5-phospho-1-deoxy-D-ribulos-1-ylimino)methylamino]-1-(5-phospho-beta-D-ribosyl)imidazole-4-carboxamide</text>
        <dbReference type="Rhea" id="RHEA:15469"/>
        <dbReference type="ChEBI" id="CHEBI:58435"/>
        <dbReference type="ChEBI" id="CHEBI:58525"/>
        <dbReference type="EC" id="5.3.1.16"/>
    </reaction>
</comment>
<comment type="pathway">
    <text evidence="1">Amino-acid biosynthesis; L-histidine biosynthesis; L-histidine from 5-phospho-alpha-D-ribose 1-diphosphate: step 4/9.</text>
</comment>
<comment type="subcellular location">
    <subcellularLocation>
        <location evidence="1">Cytoplasm</location>
    </subcellularLocation>
</comment>
<comment type="similarity">
    <text evidence="1">Belongs to the HisA/HisF family.</text>
</comment>
<accession>Q0AP83</accession>
<feature type="chain" id="PRO_0000290492" description="1-(5-phosphoribosyl)-5-[(5-phosphoribosylamino)methylideneamino] imidazole-4-carboxamide isomerase">
    <location>
        <begin position="1"/>
        <end position="244"/>
    </location>
</feature>
<feature type="active site" description="Proton acceptor" evidence="1">
    <location>
        <position position="8"/>
    </location>
</feature>
<feature type="active site" description="Proton donor" evidence="1">
    <location>
        <position position="129"/>
    </location>
</feature>
<evidence type="ECO:0000255" key="1">
    <source>
        <dbReference type="HAMAP-Rule" id="MF_01014"/>
    </source>
</evidence>
<dbReference type="EC" id="5.3.1.16" evidence="1"/>
<dbReference type="EMBL" id="CP000449">
    <property type="protein sequence ID" value="ABI65904.1"/>
    <property type="molecule type" value="Genomic_DNA"/>
</dbReference>
<dbReference type="RefSeq" id="WP_011643551.1">
    <property type="nucleotide sequence ID" value="NC_008347.1"/>
</dbReference>
<dbReference type="SMR" id="Q0AP83"/>
<dbReference type="STRING" id="394221.Mmar10_1612"/>
<dbReference type="KEGG" id="mmr:Mmar10_1612"/>
<dbReference type="eggNOG" id="COG0106">
    <property type="taxonomic scope" value="Bacteria"/>
</dbReference>
<dbReference type="HOGENOM" id="CLU_048577_1_2_5"/>
<dbReference type="OrthoDB" id="9807749at2"/>
<dbReference type="UniPathway" id="UPA00031">
    <property type="reaction ID" value="UER00009"/>
</dbReference>
<dbReference type="Proteomes" id="UP000001964">
    <property type="component" value="Chromosome"/>
</dbReference>
<dbReference type="GO" id="GO:0005737">
    <property type="term" value="C:cytoplasm"/>
    <property type="evidence" value="ECO:0007669"/>
    <property type="project" value="UniProtKB-SubCell"/>
</dbReference>
<dbReference type="GO" id="GO:0003949">
    <property type="term" value="F:1-(5-phosphoribosyl)-5-[(5-phosphoribosylamino)methylideneamino]imidazole-4-carboxamide isomerase activity"/>
    <property type="evidence" value="ECO:0007669"/>
    <property type="project" value="UniProtKB-UniRule"/>
</dbReference>
<dbReference type="GO" id="GO:0000105">
    <property type="term" value="P:L-histidine biosynthetic process"/>
    <property type="evidence" value="ECO:0007669"/>
    <property type="project" value="UniProtKB-UniRule"/>
</dbReference>
<dbReference type="GO" id="GO:0000162">
    <property type="term" value="P:L-tryptophan biosynthetic process"/>
    <property type="evidence" value="ECO:0007669"/>
    <property type="project" value="TreeGrafter"/>
</dbReference>
<dbReference type="CDD" id="cd04732">
    <property type="entry name" value="HisA"/>
    <property type="match status" value="1"/>
</dbReference>
<dbReference type="FunFam" id="3.20.20.70:FF:000009">
    <property type="entry name" value="1-(5-phosphoribosyl)-5-[(5-phosphoribosylamino)methylideneamino] imidazole-4-carboxamide isomerase"/>
    <property type="match status" value="1"/>
</dbReference>
<dbReference type="Gene3D" id="3.20.20.70">
    <property type="entry name" value="Aldolase class I"/>
    <property type="match status" value="1"/>
</dbReference>
<dbReference type="HAMAP" id="MF_01014">
    <property type="entry name" value="HisA"/>
    <property type="match status" value="1"/>
</dbReference>
<dbReference type="InterPro" id="IPR013785">
    <property type="entry name" value="Aldolase_TIM"/>
</dbReference>
<dbReference type="InterPro" id="IPR006062">
    <property type="entry name" value="His_biosynth"/>
</dbReference>
<dbReference type="InterPro" id="IPR006063">
    <property type="entry name" value="HisA_bact_arch"/>
</dbReference>
<dbReference type="InterPro" id="IPR044524">
    <property type="entry name" value="Isoase_HisA-like"/>
</dbReference>
<dbReference type="InterPro" id="IPR023016">
    <property type="entry name" value="Isoase_HisA-like_bact"/>
</dbReference>
<dbReference type="InterPro" id="IPR011060">
    <property type="entry name" value="RibuloseP-bd_barrel"/>
</dbReference>
<dbReference type="NCBIfam" id="TIGR00007">
    <property type="entry name" value="1-(5-phosphoribosyl)-5-[(5-phosphoribosylamino)methylideneamino]imidazole-4-carboxamide isomerase"/>
    <property type="match status" value="1"/>
</dbReference>
<dbReference type="PANTHER" id="PTHR43090">
    <property type="entry name" value="1-(5-PHOSPHORIBOSYL)-5-[(5-PHOSPHORIBOSYLAMINO)METHYLIDENEAMINO] IMIDAZOLE-4-CARBOXAMIDE ISOMERASE"/>
    <property type="match status" value="1"/>
</dbReference>
<dbReference type="PANTHER" id="PTHR43090:SF2">
    <property type="entry name" value="1-(5-PHOSPHORIBOSYL)-5-[(5-PHOSPHORIBOSYLAMINO)METHYLIDENEAMINO] IMIDAZOLE-4-CARBOXAMIDE ISOMERASE"/>
    <property type="match status" value="1"/>
</dbReference>
<dbReference type="Pfam" id="PF00977">
    <property type="entry name" value="His_biosynth"/>
    <property type="match status" value="1"/>
</dbReference>
<dbReference type="SUPFAM" id="SSF51366">
    <property type="entry name" value="Ribulose-phoshate binding barrel"/>
    <property type="match status" value="1"/>
</dbReference>
<reference key="1">
    <citation type="submission" date="2006-08" db="EMBL/GenBank/DDBJ databases">
        <title>Complete sequence of Maricaulis maris MCS10.</title>
        <authorList>
            <consortium name="US DOE Joint Genome Institute"/>
            <person name="Copeland A."/>
            <person name="Lucas S."/>
            <person name="Lapidus A."/>
            <person name="Barry K."/>
            <person name="Detter J.C."/>
            <person name="Glavina del Rio T."/>
            <person name="Hammon N."/>
            <person name="Israni S."/>
            <person name="Dalin E."/>
            <person name="Tice H."/>
            <person name="Pitluck S."/>
            <person name="Saunders E."/>
            <person name="Brettin T."/>
            <person name="Bruce D."/>
            <person name="Han C."/>
            <person name="Tapia R."/>
            <person name="Gilna P."/>
            <person name="Schmutz J."/>
            <person name="Larimer F."/>
            <person name="Land M."/>
            <person name="Hauser L."/>
            <person name="Kyrpides N."/>
            <person name="Mikhailova N."/>
            <person name="Viollier P."/>
            <person name="Stephens C."/>
            <person name="Richardson P."/>
        </authorList>
    </citation>
    <scope>NUCLEOTIDE SEQUENCE [LARGE SCALE GENOMIC DNA]</scope>
    <source>
        <strain>MCS10</strain>
    </source>
</reference>